<protein>
    <recommendedName>
        <fullName>3-dehydroquinate dehydratase</fullName>
        <shortName>3-dehydroquinase</shortName>
        <ecNumber>4.2.1.10</ecNumber>
    </recommendedName>
    <alternativeName>
        <fullName>Type II DHQase</fullName>
    </alternativeName>
</protein>
<gene>
    <name type="primary">aroQ</name>
    <name type="ordered locus">sll1112</name>
</gene>
<evidence type="ECO:0000250" key="1"/>
<evidence type="ECO:0000305" key="2"/>
<comment type="function">
    <text evidence="1">Catalyzes a trans-dehydration via an enolate intermediate.</text>
</comment>
<comment type="catalytic activity">
    <reaction>
        <text>3-dehydroquinate = 3-dehydroshikimate + H2O</text>
        <dbReference type="Rhea" id="RHEA:21096"/>
        <dbReference type="ChEBI" id="CHEBI:15377"/>
        <dbReference type="ChEBI" id="CHEBI:16630"/>
        <dbReference type="ChEBI" id="CHEBI:32364"/>
        <dbReference type="EC" id="4.2.1.10"/>
    </reaction>
</comment>
<comment type="pathway">
    <text>Metabolic intermediate biosynthesis; chorismate biosynthesis; chorismate from D-erythrose 4-phosphate and phosphoenolpyruvate: step 3/7.</text>
</comment>
<comment type="subunit">
    <text evidence="1">Homododecamer.</text>
</comment>
<comment type="similarity">
    <text evidence="2">Belongs to the type-II 3-dehydroquinase family.</text>
</comment>
<name>AROQ_SYNY3</name>
<proteinExistence type="inferred from homology"/>
<organism>
    <name type="scientific">Synechocystis sp. (strain ATCC 27184 / PCC 6803 / Kazusa)</name>
    <dbReference type="NCBI Taxonomy" id="1111708"/>
    <lineage>
        <taxon>Bacteria</taxon>
        <taxon>Bacillati</taxon>
        <taxon>Cyanobacteriota</taxon>
        <taxon>Cyanophyceae</taxon>
        <taxon>Synechococcales</taxon>
        <taxon>Merismopediaceae</taxon>
        <taxon>Synechocystis</taxon>
    </lineage>
</organism>
<reference key="1">
    <citation type="journal article" date="1996" name="DNA Res.">
        <title>Sequence analysis of the genome of the unicellular cyanobacterium Synechocystis sp. strain PCC6803. II. Sequence determination of the entire genome and assignment of potential protein-coding regions.</title>
        <authorList>
            <person name="Kaneko T."/>
            <person name="Sato S."/>
            <person name="Kotani H."/>
            <person name="Tanaka A."/>
            <person name="Asamizu E."/>
            <person name="Nakamura Y."/>
            <person name="Miyajima N."/>
            <person name="Hirosawa M."/>
            <person name="Sugiura M."/>
            <person name="Sasamoto S."/>
            <person name="Kimura T."/>
            <person name="Hosouchi T."/>
            <person name="Matsuno A."/>
            <person name="Muraki A."/>
            <person name="Nakazaki N."/>
            <person name="Naruo K."/>
            <person name="Okumura S."/>
            <person name="Shimpo S."/>
            <person name="Takeuchi C."/>
            <person name="Wada T."/>
            <person name="Watanabe A."/>
            <person name="Yamada M."/>
            <person name="Yasuda M."/>
            <person name="Tabata S."/>
        </authorList>
    </citation>
    <scope>NUCLEOTIDE SEQUENCE [LARGE SCALE GENOMIC DNA]</scope>
    <source>
        <strain>ATCC 27184 / PCC 6803 / Kazusa</strain>
    </source>
</reference>
<accession>P73367</accession>
<feature type="chain" id="PRO_0000159933" description="3-dehydroquinate dehydratase">
    <location>
        <begin position="1"/>
        <end position="152"/>
    </location>
</feature>
<feature type="active site" description="Proton acceptor" evidence="1">
    <location>
        <position position="26"/>
    </location>
</feature>
<feature type="active site" description="Proton donor" evidence="1">
    <location>
        <position position="103"/>
    </location>
</feature>
<feature type="binding site" evidence="1">
    <location>
        <position position="77"/>
    </location>
    <ligand>
        <name>substrate</name>
    </ligand>
</feature>
<feature type="binding site" evidence="1">
    <location>
        <position position="83"/>
    </location>
    <ligand>
        <name>substrate</name>
    </ligand>
</feature>
<feature type="binding site" evidence="1">
    <location>
        <position position="90"/>
    </location>
    <ligand>
        <name>substrate</name>
    </ligand>
</feature>
<feature type="binding site" evidence="1">
    <location>
        <begin position="104"/>
        <end position="105"/>
    </location>
    <ligand>
        <name>substrate</name>
    </ligand>
</feature>
<feature type="binding site" evidence="1">
    <location>
        <position position="114"/>
    </location>
    <ligand>
        <name>substrate</name>
    </ligand>
</feature>
<feature type="site" description="Transition state stabilizer" evidence="1">
    <location>
        <position position="21"/>
    </location>
</feature>
<keyword id="KW-0028">Amino-acid biosynthesis</keyword>
<keyword id="KW-0057">Aromatic amino acid biosynthesis</keyword>
<keyword id="KW-0456">Lyase</keyword>
<keyword id="KW-1185">Reference proteome</keyword>
<sequence>MTTVWKVLVLHGPNLNLLGQREPGIYGSLTLGEIDACLREDGVDLEAEVSTFQSNSEGQLVTAIHGALGNYHGIVFNAAAYTHTSIALRDALAAVQLPCVEVHLSNIHKRESFRHISHIAPVAIGQICGFGLNSYRLGLRALVDYLNGQADS</sequence>
<dbReference type="EC" id="4.2.1.10"/>
<dbReference type="EMBL" id="BA000022">
    <property type="protein sequence ID" value="BAA17398.1"/>
    <property type="molecule type" value="Genomic_DNA"/>
</dbReference>
<dbReference type="PIR" id="S77551">
    <property type="entry name" value="S77551"/>
</dbReference>
<dbReference type="SMR" id="P73367"/>
<dbReference type="FunCoup" id="P73367">
    <property type="interactions" value="184"/>
</dbReference>
<dbReference type="IntAct" id="P73367">
    <property type="interactions" value="1"/>
</dbReference>
<dbReference type="STRING" id="1148.gene:10498261"/>
<dbReference type="PaxDb" id="1148-1652476"/>
<dbReference type="EnsemblBacteria" id="BAA17398">
    <property type="protein sequence ID" value="BAA17398"/>
    <property type="gene ID" value="BAA17398"/>
</dbReference>
<dbReference type="KEGG" id="syn:sll1112"/>
<dbReference type="eggNOG" id="COG0757">
    <property type="taxonomic scope" value="Bacteria"/>
</dbReference>
<dbReference type="InParanoid" id="P73367"/>
<dbReference type="PhylomeDB" id="P73367"/>
<dbReference type="UniPathway" id="UPA00053">
    <property type="reaction ID" value="UER00086"/>
</dbReference>
<dbReference type="Proteomes" id="UP000001425">
    <property type="component" value="Chromosome"/>
</dbReference>
<dbReference type="GO" id="GO:0003855">
    <property type="term" value="F:3-dehydroquinate dehydratase activity"/>
    <property type="evidence" value="ECO:0000318"/>
    <property type="project" value="GO_Central"/>
</dbReference>
<dbReference type="GO" id="GO:0008652">
    <property type="term" value="P:amino acid biosynthetic process"/>
    <property type="evidence" value="ECO:0007669"/>
    <property type="project" value="UniProtKB-KW"/>
</dbReference>
<dbReference type="GO" id="GO:0009073">
    <property type="term" value="P:aromatic amino acid family biosynthetic process"/>
    <property type="evidence" value="ECO:0007669"/>
    <property type="project" value="UniProtKB-KW"/>
</dbReference>
<dbReference type="GO" id="GO:0009423">
    <property type="term" value="P:chorismate biosynthetic process"/>
    <property type="evidence" value="ECO:0007669"/>
    <property type="project" value="UniProtKB-UniRule"/>
</dbReference>
<dbReference type="GO" id="GO:0019631">
    <property type="term" value="P:quinate catabolic process"/>
    <property type="evidence" value="ECO:0000318"/>
    <property type="project" value="GO_Central"/>
</dbReference>
<dbReference type="CDD" id="cd00466">
    <property type="entry name" value="DHQase_II"/>
    <property type="match status" value="1"/>
</dbReference>
<dbReference type="Gene3D" id="3.40.50.9100">
    <property type="entry name" value="Dehydroquinase, class II"/>
    <property type="match status" value="1"/>
</dbReference>
<dbReference type="HAMAP" id="MF_00169">
    <property type="entry name" value="AroQ"/>
    <property type="match status" value="1"/>
</dbReference>
<dbReference type="InterPro" id="IPR001874">
    <property type="entry name" value="DHquinase_II"/>
</dbReference>
<dbReference type="InterPro" id="IPR018509">
    <property type="entry name" value="DHquinase_II_CS"/>
</dbReference>
<dbReference type="InterPro" id="IPR036441">
    <property type="entry name" value="DHquinase_II_sf"/>
</dbReference>
<dbReference type="NCBIfam" id="TIGR01088">
    <property type="entry name" value="aroQ"/>
    <property type="match status" value="1"/>
</dbReference>
<dbReference type="NCBIfam" id="NF003805">
    <property type="entry name" value="PRK05395.1-2"/>
    <property type="match status" value="1"/>
</dbReference>
<dbReference type="NCBIfam" id="NF003806">
    <property type="entry name" value="PRK05395.1-3"/>
    <property type="match status" value="1"/>
</dbReference>
<dbReference type="NCBIfam" id="NF003807">
    <property type="entry name" value="PRK05395.1-4"/>
    <property type="match status" value="1"/>
</dbReference>
<dbReference type="PANTHER" id="PTHR21272">
    <property type="entry name" value="CATABOLIC 3-DEHYDROQUINASE"/>
    <property type="match status" value="1"/>
</dbReference>
<dbReference type="PANTHER" id="PTHR21272:SF3">
    <property type="entry name" value="CATABOLIC 3-DEHYDROQUINASE"/>
    <property type="match status" value="1"/>
</dbReference>
<dbReference type="Pfam" id="PF01220">
    <property type="entry name" value="DHquinase_II"/>
    <property type="match status" value="1"/>
</dbReference>
<dbReference type="PIRSF" id="PIRSF001399">
    <property type="entry name" value="DHquinase_II"/>
    <property type="match status" value="1"/>
</dbReference>
<dbReference type="SUPFAM" id="SSF52304">
    <property type="entry name" value="Type II 3-dehydroquinate dehydratase"/>
    <property type="match status" value="1"/>
</dbReference>
<dbReference type="PROSITE" id="PS01029">
    <property type="entry name" value="DEHYDROQUINASE_II"/>
    <property type="match status" value="1"/>
</dbReference>